<accession>Q3B080</accession>
<feature type="chain" id="PRO_1000021188" description="4-hydroxy-3-methylbut-2-enyl diphosphate reductase">
    <location>
        <begin position="1"/>
        <end position="399"/>
    </location>
</feature>
<feature type="active site" description="Proton donor" evidence="1">
    <location>
        <position position="187"/>
    </location>
</feature>
<feature type="binding site" evidence="1">
    <location>
        <position position="66"/>
    </location>
    <ligand>
        <name>[4Fe-4S] cluster</name>
        <dbReference type="ChEBI" id="CHEBI:49883"/>
    </ligand>
</feature>
<feature type="binding site" evidence="1">
    <location>
        <position position="96"/>
    </location>
    <ligand>
        <name>(2E)-4-hydroxy-3-methylbut-2-enyl diphosphate</name>
        <dbReference type="ChEBI" id="CHEBI:128753"/>
    </ligand>
</feature>
<feature type="binding site" evidence="1">
    <location>
        <position position="96"/>
    </location>
    <ligand>
        <name>dimethylallyl diphosphate</name>
        <dbReference type="ChEBI" id="CHEBI:57623"/>
    </ligand>
</feature>
<feature type="binding site" evidence="1">
    <location>
        <position position="96"/>
    </location>
    <ligand>
        <name>isopentenyl diphosphate</name>
        <dbReference type="ChEBI" id="CHEBI:128769"/>
    </ligand>
</feature>
<feature type="binding site" evidence="1">
    <location>
        <position position="157"/>
    </location>
    <ligand>
        <name>[4Fe-4S] cluster</name>
        <dbReference type="ChEBI" id="CHEBI:49883"/>
    </ligand>
</feature>
<feature type="binding site" evidence="1">
    <location>
        <position position="185"/>
    </location>
    <ligand>
        <name>(2E)-4-hydroxy-3-methylbut-2-enyl diphosphate</name>
        <dbReference type="ChEBI" id="CHEBI:128753"/>
    </ligand>
</feature>
<feature type="binding site" evidence="1">
    <location>
        <position position="185"/>
    </location>
    <ligand>
        <name>dimethylallyl diphosphate</name>
        <dbReference type="ChEBI" id="CHEBI:57623"/>
    </ligand>
</feature>
<feature type="binding site" evidence="1">
    <location>
        <position position="185"/>
    </location>
    <ligand>
        <name>isopentenyl diphosphate</name>
        <dbReference type="ChEBI" id="CHEBI:128769"/>
    </ligand>
</feature>
<feature type="binding site" evidence="1">
    <location>
        <position position="250"/>
    </location>
    <ligand>
        <name>(2E)-4-hydroxy-3-methylbut-2-enyl diphosphate</name>
        <dbReference type="ChEBI" id="CHEBI:128753"/>
    </ligand>
</feature>
<feature type="binding site" evidence="1">
    <location>
        <position position="288"/>
    </location>
    <ligand>
        <name>[4Fe-4S] cluster</name>
        <dbReference type="ChEBI" id="CHEBI:49883"/>
    </ligand>
</feature>
<feature type="binding site" evidence="1">
    <location>
        <position position="317"/>
    </location>
    <ligand>
        <name>(2E)-4-hydroxy-3-methylbut-2-enyl diphosphate</name>
        <dbReference type="ChEBI" id="CHEBI:128753"/>
    </ligand>
</feature>
<feature type="binding site" evidence="1">
    <location>
        <position position="317"/>
    </location>
    <ligand>
        <name>dimethylallyl diphosphate</name>
        <dbReference type="ChEBI" id="CHEBI:57623"/>
    </ligand>
</feature>
<feature type="binding site" evidence="1">
    <location>
        <position position="317"/>
    </location>
    <ligand>
        <name>isopentenyl diphosphate</name>
        <dbReference type="ChEBI" id="CHEBI:128769"/>
    </ligand>
</feature>
<feature type="binding site" evidence="1">
    <location>
        <position position="318"/>
    </location>
    <ligand>
        <name>(2E)-4-hydroxy-3-methylbut-2-enyl diphosphate</name>
        <dbReference type="ChEBI" id="CHEBI:128753"/>
    </ligand>
</feature>
<feature type="binding site" evidence="1">
    <location>
        <position position="318"/>
    </location>
    <ligand>
        <name>dimethylallyl diphosphate</name>
        <dbReference type="ChEBI" id="CHEBI:57623"/>
    </ligand>
</feature>
<feature type="binding site" evidence="1">
    <location>
        <position position="318"/>
    </location>
    <ligand>
        <name>isopentenyl diphosphate</name>
        <dbReference type="ChEBI" id="CHEBI:128769"/>
    </ligand>
</feature>
<feature type="binding site" evidence="1">
    <location>
        <position position="319"/>
    </location>
    <ligand>
        <name>(2E)-4-hydroxy-3-methylbut-2-enyl diphosphate</name>
        <dbReference type="ChEBI" id="CHEBI:128753"/>
    </ligand>
</feature>
<feature type="binding site" evidence="1">
    <location>
        <position position="319"/>
    </location>
    <ligand>
        <name>dimethylallyl diphosphate</name>
        <dbReference type="ChEBI" id="CHEBI:57623"/>
    </ligand>
</feature>
<feature type="binding site" evidence="1">
    <location>
        <position position="319"/>
    </location>
    <ligand>
        <name>isopentenyl diphosphate</name>
        <dbReference type="ChEBI" id="CHEBI:128769"/>
    </ligand>
</feature>
<feature type="binding site" evidence="1">
    <location>
        <position position="380"/>
    </location>
    <ligand>
        <name>(2E)-4-hydroxy-3-methylbut-2-enyl diphosphate</name>
        <dbReference type="ChEBI" id="CHEBI:128753"/>
    </ligand>
</feature>
<feature type="binding site" evidence="1">
    <location>
        <position position="380"/>
    </location>
    <ligand>
        <name>dimethylallyl diphosphate</name>
        <dbReference type="ChEBI" id="CHEBI:57623"/>
    </ligand>
</feature>
<feature type="binding site" evidence="1">
    <location>
        <position position="380"/>
    </location>
    <ligand>
        <name>isopentenyl diphosphate</name>
        <dbReference type="ChEBI" id="CHEBI:128769"/>
    </ligand>
</feature>
<proteinExistence type="inferred from homology"/>
<organism>
    <name type="scientific">Synechococcus sp. (strain CC9902)</name>
    <dbReference type="NCBI Taxonomy" id="316279"/>
    <lineage>
        <taxon>Bacteria</taxon>
        <taxon>Bacillati</taxon>
        <taxon>Cyanobacteriota</taxon>
        <taxon>Cyanophyceae</taxon>
        <taxon>Synechococcales</taxon>
        <taxon>Synechococcaceae</taxon>
        <taxon>Synechococcus</taxon>
    </lineage>
</organism>
<protein>
    <recommendedName>
        <fullName evidence="1">4-hydroxy-3-methylbut-2-enyl diphosphate reductase</fullName>
        <shortName evidence="1">HMBPP reductase</shortName>
        <ecNumber evidence="1">1.17.7.4</ecNumber>
    </recommendedName>
</protein>
<evidence type="ECO:0000255" key="1">
    <source>
        <dbReference type="HAMAP-Rule" id="MF_00191"/>
    </source>
</evidence>
<name>ISPH_SYNS9</name>
<sequence>MDTHAFKRSLHHSERYNRRGFGRAEEVAENLEQAYQSGLIGTIRDNGYKLTHGRLNVHLAEAFGFCWGVERAVAMAYETRRHYPSERLWITNEIIHNPSVNDHLREMDVLFIPVEEGVKDFSGVTSGDVVILPAFGATVQEMQLLNERGCHIVDTTCPWVSKVWNTVEKHKKHTFTSVIHGKVKHEETLATSSFAGTYLVVLDLEEAQIVVDYILGKGDREAFMQRFAKACSEGFDPDRDLERLGVANQTTMLKSETEEIGRMFERTMLSKYGPADLNEHFLAYNTICDATQERQDAMFSLVDEPLDLLVVIGGFNSSNTTHLQEIAVSRGIRSFHIDTPDRIDETTNSIEHKPLSEDLKRDQVFLPAGPVTVGITSGASTPDRAVEAVIEKLMRLSEN</sequence>
<keyword id="KW-0004">4Fe-4S</keyword>
<keyword id="KW-0408">Iron</keyword>
<keyword id="KW-0411">Iron-sulfur</keyword>
<keyword id="KW-0414">Isoprene biosynthesis</keyword>
<keyword id="KW-0479">Metal-binding</keyword>
<keyword id="KW-0560">Oxidoreductase</keyword>
<keyword id="KW-1185">Reference proteome</keyword>
<reference key="1">
    <citation type="submission" date="2005-08" db="EMBL/GenBank/DDBJ databases">
        <title>Complete sequence of Synechococcus sp. CC9902.</title>
        <authorList>
            <person name="Copeland A."/>
            <person name="Lucas S."/>
            <person name="Lapidus A."/>
            <person name="Barry K."/>
            <person name="Detter J.C."/>
            <person name="Glavina T."/>
            <person name="Hammon N."/>
            <person name="Israni S."/>
            <person name="Pitluck S."/>
            <person name="Martinez M."/>
            <person name="Schmutz J."/>
            <person name="Larimer F."/>
            <person name="Land M."/>
            <person name="Kyrpides N."/>
            <person name="Ivanova N."/>
            <person name="Richardson P."/>
        </authorList>
    </citation>
    <scope>NUCLEOTIDE SEQUENCE [LARGE SCALE GENOMIC DNA]</scope>
    <source>
        <strain>CC9902</strain>
    </source>
</reference>
<gene>
    <name evidence="1" type="primary">ispH</name>
    <name type="ordered locus">Syncc9902_0275</name>
</gene>
<dbReference type="EC" id="1.17.7.4" evidence="1"/>
<dbReference type="EMBL" id="CP000097">
    <property type="protein sequence ID" value="ABB25248.1"/>
    <property type="molecule type" value="Genomic_DNA"/>
</dbReference>
<dbReference type="RefSeq" id="WP_011359108.1">
    <property type="nucleotide sequence ID" value="NC_007513.1"/>
</dbReference>
<dbReference type="SMR" id="Q3B080"/>
<dbReference type="STRING" id="316279.Syncc9902_0275"/>
<dbReference type="KEGG" id="sye:Syncc9902_0275"/>
<dbReference type="eggNOG" id="COG0761">
    <property type="taxonomic scope" value="Bacteria"/>
</dbReference>
<dbReference type="HOGENOM" id="CLU_027486_4_0_3"/>
<dbReference type="OrthoDB" id="9804077at2"/>
<dbReference type="UniPathway" id="UPA00056">
    <property type="reaction ID" value="UER00097"/>
</dbReference>
<dbReference type="UniPathway" id="UPA00059">
    <property type="reaction ID" value="UER00105"/>
</dbReference>
<dbReference type="Proteomes" id="UP000002712">
    <property type="component" value="Chromosome"/>
</dbReference>
<dbReference type="GO" id="GO:0051539">
    <property type="term" value="F:4 iron, 4 sulfur cluster binding"/>
    <property type="evidence" value="ECO:0007669"/>
    <property type="project" value="UniProtKB-UniRule"/>
</dbReference>
<dbReference type="GO" id="GO:0051745">
    <property type="term" value="F:4-hydroxy-3-methylbut-2-enyl diphosphate reductase activity"/>
    <property type="evidence" value="ECO:0007669"/>
    <property type="project" value="UniProtKB-UniRule"/>
</dbReference>
<dbReference type="GO" id="GO:0046872">
    <property type="term" value="F:metal ion binding"/>
    <property type="evidence" value="ECO:0007669"/>
    <property type="project" value="UniProtKB-KW"/>
</dbReference>
<dbReference type="GO" id="GO:0050992">
    <property type="term" value="P:dimethylallyl diphosphate biosynthetic process"/>
    <property type="evidence" value="ECO:0007669"/>
    <property type="project" value="UniProtKB-UniRule"/>
</dbReference>
<dbReference type="GO" id="GO:0019288">
    <property type="term" value="P:isopentenyl diphosphate biosynthetic process, methylerythritol 4-phosphate pathway"/>
    <property type="evidence" value="ECO:0007669"/>
    <property type="project" value="UniProtKB-UniRule"/>
</dbReference>
<dbReference type="GO" id="GO:0016114">
    <property type="term" value="P:terpenoid biosynthetic process"/>
    <property type="evidence" value="ECO:0007669"/>
    <property type="project" value="UniProtKB-UniRule"/>
</dbReference>
<dbReference type="CDD" id="cd13944">
    <property type="entry name" value="lytB_ispH"/>
    <property type="match status" value="1"/>
</dbReference>
<dbReference type="Gene3D" id="3.40.50.11270">
    <property type="match status" value="1"/>
</dbReference>
<dbReference type="Gene3D" id="3.40.1010.20">
    <property type="entry name" value="4-hydroxy-3-methylbut-2-enyl diphosphate reductase, catalytic domain"/>
    <property type="match status" value="2"/>
</dbReference>
<dbReference type="HAMAP" id="MF_00191">
    <property type="entry name" value="IspH"/>
    <property type="match status" value="1"/>
</dbReference>
<dbReference type="InterPro" id="IPR003451">
    <property type="entry name" value="LytB/IspH"/>
</dbReference>
<dbReference type="NCBIfam" id="TIGR00216">
    <property type="entry name" value="ispH_lytB"/>
    <property type="match status" value="1"/>
</dbReference>
<dbReference type="NCBIfam" id="NF009911">
    <property type="entry name" value="PRK13371.1"/>
    <property type="match status" value="1"/>
</dbReference>
<dbReference type="PANTHER" id="PTHR31619">
    <property type="entry name" value="4-HYDROXY-3-METHYLBUT-2-ENYL DIPHOSPHATE REDUCTASE, CHLOROPLASTIC"/>
    <property type="match status" value="1"/>
</dbReference>
<dbReference type="PANTHER" id="PTHR31619:SF5">
    <property type="entry name" value="4-HYDROXY-3-METHYLBUT-2-ENYL DIPHOSPHATE REDUCTASE, CHLOROPLASTIC"/>
    <property type="match status" value="1"/>
</dbReference>
<dbReference type="Pfam" id="PF02401">
    <property type="entry name" value="LYTB"/>
    <property type="match status" value="1"/>
</dbReference>
<comment type="function">
    <text evidence="1">Catalyzes the conversion of 1-hydroxy-2-methyl-2-(E)-butenyl 4-diphosphate (HMBPP) into a mixture of isopentenyl diphosphate (IPP) and dimethylallyl diphosphate (DMAPP). Acts in the terminal step of the DOXP/MEP pathway for isoprenoid precursor biosynthesis.</text>
</comment>
<comment type="catalytic activity">
    <reaction evidence="1">
        <text>isopentenyl diphosphate + 2 oxidized [2Fe-2S]-[ferredoxin] + H2O = (2E)-4-hydroxy-3-methylbut-2-enyl diphosphate + 2 reduced [2Fe-2S]-[ferredoxin] + 2 H(+)</text>
        <dbReference type="Rhea" id="RHEA:24488"/>
        <dbReference type="Rhea" id="RHEA-COMP:10000"/>
        <dbReference type="Rhea" id="RHEA-COMP:10001"/>
        <dbReference type="ChEBI" id="CHEBI:15377"/>
        <dbReference type="ChEBI" id="CHEBI:15378"/>
        <dbReference type="ChEBI" id="CHEBI:33737"/>
        <dbReference type="ChEBI" id="CHEBI:33738"/>
        <dbReference type="ChEBI" id="CHEBI:128753"/>
        <dbReference type="ChEBI" id="CHEBI:128769"/>
        <dbReference type="EC" id="1.17.7.4"/>
    </reaction>
</comment>
<comment type="catalytic activity">
    <reaction evidence="1">
        <text>dimethylallyl diphosphate + 2 oxidized [2Fe-2S]-[ferredoxin] + H2O = (2E)-4-hydroxy-3-methylbut-2-enyl diphosphate + 2 reduced [2Fe-2S]-[ferredoxin] + 2 H(+)</text>
        <dbReference type="Rhea" id="RHEA:24825"/>
        <dbReference type="Rhea" id="RHEA-COMP:10000"/>
        <dbReference type="Rhea" id="RHEA-COMP:10001"/>
        <dbReference type="ChEBI" id="CHEBI:15377"/>
        <dbReference type="ChEBI" id="CHEBI:15378"/>
        <dbReference type="ChEBI" id="CHEBI:33737"/>
        <dbReference type="ChEBI" id="CHEBI:33738"/>
        <dbReference type="ChEBI" id="CHEBI:57623"/>
        <dbReference type="ChEBI" id="CHEBI:128753"/>
        <dbReference type="EC" id="1.17.7.4"/>
    </reaction>
</comment>
<comment type="cofactor">
    <cofactor evidence="1">
        <name>[4Fe-4S] cluster</name>
        <dbReference type="ChEBI" id="CHEBI:49883"/>
    </cofactor>
    <text evidence="1">Binds 1 [4Fe-4S] cluster per subunit.</text>
</comment>
<comment type="pathway">
    <text evidence="1">Isoprenoid biosynthesis; dimethylallyl diphosphate biosynthesis; dimethylallyl diphosphate from (2E)-4-hydroxy-3-methylbutenyl diphosphate: step 1/1.</text>
</comment>
<comment type="pathway">
    <text evidence="1">Isoprenoid biosynthesis; isopentenyl diphosphate biosynthesis via DXP pathway; isopentenyl diphosphate from 1-deoxy-D-xylulose 5-phosphate: step 6/6.</text>
</comment>
<comment type="similarity">
    <text evidence="1">Belongs to the IspH family.</text>
</comment>